<dbReference type="EMBL" id="AP009324">
    <property type="protein sequence ID" value="BAF78062.1"/>
    <property type="molecule type" value="Genomic_DNA"/>
</dbReference>
<dbReference type="RefSeq" id="WP_000018608.1">
    <property type="nucleotide sequence ID" value="NZ_CTYB01000010.1"/>
</dbReference>
<dbReference type="SMR" id="A7X1D2"/>
<dbReference type="KEGG" id="saw:SAHV_1179"/>
<dbReference type="HOGENOM" id="CLU_078499_4_1_9"/>
<dbReference type="GO" id="GO:0005737">
    <property type="term" value="C:cytoplasm"/>
    <property type="evidence" value="ECO:0007669"/>
    <property type="project" value="UniProtKB-SubCell"/>
</dbReference>
<dbReference type="GO" id="GO:0000917">
    <property type="term" value="P:division septum assembly"/>
    <property type="evidence" value="ECO:0007669"/>
    <property type="project" value="UniProtKB-KW"/>
</dbReference>
<dbReference type="GO" id="GO:0043093">
    <property type="term" value="P:FtsZ-dependent cytokinesis"/>
    <property type="evidence" value="ECO:0007669"/>
    <property type="project" value="UniProtKB-UniRule"/>
</dbReference>
<dbReference type="Gene3D" id="3.30.110.150">
    <property type="entry name" value="SepF-like protein"/>
    <property type="match status" value="1"/>
</dbReference>
<dbReference type="HAMAP" id="MF_01197">
    <property type="entry name" value="SepF"/>
    <property type="match status" value="1"/>
</dbReference>
<dbReference type="InterPro" id="IPR023052">
    <property type="entry name" value="Cell_div_SepF"/>
</dbReference>
<dbReference type="InterPro" id="IPR007561">
    <property type="entry name" value="Cell_div_SepF/SepF-rel"/>
</dbReference>
<dbReference type="InterPro" id="IPR038594">
    <property type="entry name" value="SepF-like_sf"/>
</dbReference>
<dbReference type="PANTHER" id="PTHR35798">
    <property type="entry name" value="CELL DIVISION PROTEIN SEPF"/>
    <property type="match status" value="1"/>
</dbReference>
<dbReference type="PANTHER" id="PTHR35798:SF1">
    <property type="entry name" value="CELL DIVISION PROTEIN SEPF"/>
    <property type="match status" value="1"/>
</dbReference>
<dbReference type="Pfam" id="PF04472">
    <property type="entry name" value="SepF"/>
    <property type="match status" value="1"/>
</dbReference>
<keyword id="KW-0131">Cell cycle</keyword>
<keyword id="KW-0132">Cell division</keyword>
<keyword id="KW-0963">Cytoplasm</keyword>
<keyword id="KW-0717">Septation</keyword>
<feature type="chain" id="PRO_0000334080" description="Cell division protein SepF">
    <location>
        <begin position="1"/>
        <end position="187"/>
    </location>
</feature>
<feature type="region of interest" description="Disordered" evidence="2">
    <location>
        <begin position="21"/>
        <end position="97"/>
    </location>
</feature>
<feature type="compositionally biased region" description="Polar residues" evidence="2">
    <location>
        <begin position="38"/>
        <end position="63"/>
    </location>
</feature>
<feature type="compositionally biased region" description="Polar residues" evidence="2">
    <location>
        <begin position="70"/>
        <end position="97"/>
    </location>
</feature>
<protein>
    <recommendedName>
        <fullName evidence="1">Cell division protein SepF</fullName>
    </recommendedName>
</protein>
<gene>
    <name evidence="1" type="primary">sepF</name>
    <name type="ordered locus">SAHV_1179</name>
</gene>
<reference key="1">
    <citation type="journal article" date="2008" name="Antimicrob. Agents Chemother.">
        <title>Mutated response regulator graR is responsible for phenotypic conversion of Staphylococcus aureus from heterogeneous vancomycin-intermediate resistance to vancomycin-intermediate resistance.</title>
        <authorList>
            <person name="Neoh H.-M."/>
            <person name="Cui L."/>
            <person name="Yuzawa H."/>
            <person name="Takeuchi F."/>
            <person name="Matsuo M."/>
            <person name="Hiramatsu K."/>
        </authorList>
    </citation>
    <scope>NUCLEOTIDE SEQUENCE [LARGE SCALE GENOMIC DNA]</scope>
    <source>
        <strain>Mu3 / ATCC 700698</strain>
    </source>
</reference>
<name>SEPF_STAA1</name>
<comment type="function">
    <text evidence="1">Cell division protein that is part of the divisome complex and is recruited early to the Z-ring. Probably stimulates Z-ring formation, perhaps through the cross-linking of FtsZ protofilaments. Its function overlaps with FtsA.</text>
</comment>
<comment type="subunit">
    <text evidence="1">Homodimer. Interacts with FtsZ.</text>
</comment>
<comment type="subcellular location">
    <subcellularLocation>
        <location evidence="1">Cytoplasm</location>
    </subcellularLocation>
    <text evidence="1">Localizes to the division site, in a FtsZ-dependent manner.</text>
</comment>
<comment type="similarity">
    <text evidence="1">Belongs to the SepF family.</text>
</comment>
<proteinExistence type="inferred from homology"/>
<sequence>MSHLALKDLFSGFFVIDDEEEVEVPDKQQQVNEAPAKEQSQQTTKQNAIKSVPQKSASRYTTTSEERNNRMSNYSKNNSRNVVTMNNATPNNASQESSKMCLFEPRVFSDTQDIADELKNRRATLVNLQRIDKVSAKRIIDFLSGTVYAIGGDIQRVGTDIFLCTPDNVEVAGSITDHIENMEHSFD</sequence>
<evidence type="ECO:0000255" key="1">
    <source>
        <dbReference type="HAMAP-Rule" id="MF_01197"/>
    </source>
</evidence>
<evidence type="ECO:0000256" key="2">
    <source>
        <dbReference type="SAM" id="MobiDB-lite"/>
    </source>
</evidence>
<accession>A7X1D2</accession>
<organism>
    <name type="scientific">Staphylococcus aureus (strain Mu3 / ATCC 700698)</name>
    <dbReference type="NCBI Taxonomy" id="418127"/>
    <lineage>
        <taxon>Bacteria</taxon>
        <taxon>Bacillati</taxon>
        <taxon>Bacillota</taxon>
        <taxon>Bacilli</taxon>
        <taxon>Bacillales</taxon>
        <taxon>Staphylococcaceae</taxon>
        <taxon>Staphylococcus</taxon>
    </lineage>
</organism>